<comment type="function">
    <text evidence="1">Catalyzes the formation of 4-diphosphocytidyl-2-C-methyl-D-erythritol from CTP and 2-C-methyl-D-erythritol 4-phosphate (MEP).</text>
</comment>
<comment type="catalytic activity">
    <reaction evidence="1">
        <text>2-C-methyl-D-erythritol 4-phosphate + CTP + H(+) = 4-CDP-2-C-methyl-D-erythritol + diphosphate</text>
        <dbReference type="Rhea" id="RHEA:13429"/>
        <dbReference type="ChEBI" id="CHEBI:15378"/>
        <dbReference type="ChEBI" id="CHEBI:33019"/>
        <dbReference type="ChEBI" id="CHEBI:37563"/>
        <dbReference type="ChEBI" id="CHEBI:57823"/>
        <dbReference type="ChEBI" id="CHEBI:58262"/>
        <dbReference type="EC" id="2.7.7.60"/>
    </reaction>
</comment>
<comment type="pathway">
    <text evidence="1">Isoprenoid biosynthesis; isopentenyl diphosphate biosynthesis via DXP pathway; isopentenyl diphosphate from 1-deoxy-D-xylulose 5-phosphate: step 2/6.</text>
</comment>
<comment type="similarity">
    <text evidence="1">Belongs to the IspD/TarI cytidylyltransferase family. IspD subfamily.</text>
</comment>
<gene>
    <name evidence="1" type="primary">ispD</name>
    <name type="ordered locus">PGN_0841</name>
</gene>
<dbReference type="EC" id="2.7.7.60" evidence="1"/>
<dbReference type="EMBL" id="AP009380">
    <property type="protein sequence ID" value="BAG33360.1"/>
    <property type="molecule type" value="Genomic_DNA"/>
</dbReference>
<dbReference type="RefSeq" id="WP_004585423.1">
    <property type="nucleotide sequence ID" value="NZ_CP025930.1"/>
</dbReference>
<dbReference type="SMR" id="B2RJ15"/>
<dbReference type="GeneID" id="29256057"/>
<dbReference type="KEGG" id="pgn:PGN_0841"/>
<dbReference type="eggNOG" id="COG1211">
    <property type="taxonomic scope" value="Bacteria"/>
</dbReference>
<dbReference type="HOGENOM" id="CLU_061281_2_2_10"/>
<dbReference type="OrthoDB" id="9806837at2"/>
<dbReference type="BioCyc" id="PGIN431947:G1G2V-925-MONOMER"/>
<dbReference type="UniPathway" id="UPA00056">
    <property type="reaction ID" value="UER00093"/>
</dbReference>
<dbReference type="Proteomes" id="UP000008842">
    <property type="component" value="Chromosome"/>
</dbReference>
<dbReference type="GO" id="GO:0050518">
    <property type="term" value="F:2-C-methyl-D-erythritol 4-phosphate cytidylyltransferase activity"/>
    <property type="evidence" value="ECO:0007669"/>
    <property type="project" value="UniProtKB-UniRule"/>
</dbReference>
<dbReference type="GO" id="GO:0019288">
    <property type="term" value="P:isopentenyl diphosphate biosynthetic process, methylerythritol 4-phosphate pathway"/>
    <property type="evidence" value="ECO:0007669"/>
    <property type="project" value="UniProtKB-UniRule"/>
</dbReference>
<dbReference type="CDD" id="cd02516">
    <property type="entry name" value="CDP-ME_synthetase"/>
    <property type="match status" value="1"/>
</dbReference>
<dbReference type="FunFam" id="3.90.550.10:FF:000003">
    <property type="entry name" value="2-C-methyl-D-erythritol 4-phosphate cytidylyltransferase"/>
    <property type="match status" value="1"/>
</dbReference>
<dbReference type="Gene3D" id="3.90.550.10">
    <property type="entry name" value="Spore Coat Polysaccharide Biosynthesis Protein SpsA, Chain A"/>
    <property type="match status" value="1"/>
</dbReference>
<dbReference type="HAMAP" id="MF_00108">
    <property type="entry name" value="IspD"/>
    <property type="match status" value="1"/>
</dbReference>
<dbReference type="InterPro" id="IPR001228">
    <property type="entry name" value="IspD"/>
</dbReference>
<dbReference type="InterPro" id="IPR034683">
    <property type="entry name" value="IspD/TarI"/>
</dbReference>
<dbReference type="InterPro" id="IPR050088">
    <property type="entry name" value="IspD/TarI_cytidylyltransf_bact"/>
</dbReference>
<dbReference type="InterPro" id="IPR029044">
    <property type="entry name" value="Nucleotide-diphossugar_trans"/>
</dbReference>
<dbReference type="NCBIfam" id="NF001186">
    <property type="entry name" value="PRK00155.2-3"/>
    <property type="match status" value="1"/>
</dbReference>
<dbReference type="PANTHER" id="PTHR32125">
    <property type="entry name" value="2-C-METHYL-D-ERYTHRITOL 4-PHOSPHATE CYTIDYLYLTRANSFERASE, CHLOROPLASTIC"/>
    <property type="match status" value="1"/>
</dbReference>
<dbReference type="PANTHER" id="PTHR32125:SF4">
    <property type="entry name" value="2-C-METHYL-D-ERYTHRITOL 4-PHOSPHATE CYTIDYLYLTRANSFERASE, CHLOROPLASTIC"/>
    <property type="match status" value="1"/>
</dbReference>
<dbReference type="Pfam" id="PF01128">
    <property type="entry name" value="IspD"/>
    <property type="match status" value="1"/>
</dbReference>
<dbReference type="SUPFAM" id="SSF53448">
    <property type="entry name" value="Nucleotide-diphospho-sugar transferases"/>
    <property type="match status" value="1"/>
</dbReference>
<proteinExistence type="inferred from homology"/>
<protein>
    <recommendedName>
        <fullName evidence="1">2-C-methyl-D-erythritol 4-phosphate cytidylyltransferase</fullName>
        <ecNumber evidence="1">2.7.7.60</ecNumber>
    </recommendedName>
    <alternativeName>
        <fullName evidence="1">4-diphosphocytidyl-2C-methyl-D-erythritol synthase</fullName>
    </alternativeName>
    <alternativeName>
        <fullName evidence="1">MEP cytidylyltransferase</fullName>
        <shortName evidence="1">MCT</shortName>
    </alternativeName>
</protein>
<reference key="1">
    <citation type="journal article" date="2008" name="DNA Res.">
        <title>Determination of the genome sequence of Porphyromonas gingivalis strain ATCC 33277 and genomic comparison with strain W83 revealed extensive genome rearrangements in P. gingivalis.</title>
        <authorList>
            <person name="Naito M."/>
            <person name="Hirakawa H."/>
            <person name="Yamashita A."/>
            <person name="Ohara N."/>
            <person name="Shoji M."/>
            <person name="Yukitake H."/>
            <person name="Nakayama K."/>
            <person name="Toh H."/>
            <person name="Yoshimura F."/>
            <person name="Kuhara S."/>
            <person name="Hattori M."/>
            <person name="Hayashi T."/>
            <person name="Nakayama K."/>
        </authorList>
    </citation>
    <scope>NUCLEOTIDE SEQUENCE [LARGE SCALE GENOMIC DNA]</scope>
    <source>
        <strain>ATCC 33277 / DSM 20709 / CIP 103683 / JCM 12257 / NCTC 11834 / 2561</strain>
    </source>
</reference>
<organism>
    <name type="scientific">Porphyromonas gingivalis (strain ATCC 33277 / DSM 20709 / CIP 103683 / JCM 12257 / NCTC 11834 / 2561)</name>
    <dbReference type="NCBI Taxonomy" id="431947"/>
    <lineage>
        <taxon>Bacteria</taxon>
        <taxon>Pseudomonadati</taxon>
        <taxon>Bacteroidota</taxon>
        <taxon>Bacteroidia</taxon>
        <taxon>Bacteroidales</taxon>
        <taxon>Porphyromonadaceae</taxon>
        <taxon>Porphyromonas</taxon>
    </lineage>
</organism>
<sequence>MKQKRYALIVAGGHGLRMGADRPKQFLLLAGLPVLMHTLNRFAPHVDAIVLVLPTDHHAYWQELCRKYDFSVSHRVVAGGNTRFASVRNGLQVVPDGVLVAVHDGVRPLVSAETIDACFDLAELKGAVAPCRPMTESLRYYATDGNYAVDRSRYVTVQTPQTFRSEWLREAYRQPYEEYFTDDCSVYEHHFGRPVALIVGNIENIKLTTPLDLSLAKLLLTS</sequence>
<keyword id="KW-0414">Isoprene biosynthesis</keyword>
<keyword id="KW-0548">Nucleotidyltransferase</keyword>
<keyword id="KW-0808">Transferase</keyword>
<feature type="chain" id="PRO_1000094337" description="2-C-methyl-D-erythritol 4-phosphate cytidylyltransferase">
    <location>
        <begin position="1"/>
        <end position="222"/>
    </location>
</feature>
<feature type="site" description="Transition state stabilizer" evidence="1">
    <location>
        <position position="17"/>
    </location>
</feature>
<feature type="site" description="Transition state stabilizer" evidence="1">
    <location>
        <position position="24"/>
    </location>
</feature>
<feature type="site" description="Positions MEP for the nucleophilic attack" evidence="1">
    <location>
        <position position="151"/>
    </location>
</feature>
<feature type="site" description="Positions MEP for the nucleophilic attack" evidence="1">
    <location>
        <position position="206"/>
    </location>
</feature>
<accession>B2RJ15</accession>
<name>ISPD_PORG3</name>
<evidence type="ECO:0000255" key="1">
    <source>
        <dbReference type="HAMAP-Rule" id="MF_00108"/>
    </source>
</evidence>